<keyword id="KW-0997">Cell inner membrane</keyword>
<keyword id="KW-1003">Cell membrane</keyword>
<keyword id="KW-0350">Heme biosynthesis</keyword>
<keyword id="KW-0472">Membrane</keyword>
<keyword id="KW-1185">Reference proteome</keyword>
<keyword id="KW-0808">Transferase</keyword>
<keyword id="KW-0812">Transmembrane</keyword>
<keyword id="KW-1133">Transmembrane helix</keyword>
<organism>
    <name type="scientific">Gloeothece citriformis (strain PCC 7424)</name>
    <name type="common">Cyanothece sp. (strain PCC 7424)</name>
    <dbReference type="NCBI Taxonomy" id="65393"/>
    <lineage>
        <taxon>Bacteria</taxon>
        <taxon>Bacillati</taxon>
        <taxon>Cyanobacteriota</taxon>
        <taxon>Cyanophyceae</taxon>
        <taxon>Oscillatoriophycideae</taxon>
        <taxon>Chroococcales</taxon>
        <taxon>Aphanothecaceae</taxon>
        <taxon>Gloeothece</taxon>
        <taxon>Gloeothece citriformis</taxon>
    </lineage>
</organism>
<comment type="function">
    <text evidence="1">Converts heme B (protoheme IX) to heme O by substitution of the vinyl group on carbon 2 of heme B porphyrin ring with a hydroxyethyl farnesyl side group.</text>
</comment>
<comment type="catalytic activity">
    <reaction evidence="1">
        <text>heme b + (2E,6E)-farnesyl diphosphate + H2O = Fe(II)-heme o + diphosphate</text>
        <dbReference type="Rhea" id="RHEA:28070"/>
        <dbReference type="ChEBI" id="CHEBI:15377"/>
        <dbReference type="ChEBI" id="CHEBI:33019"/>
        <dbReference type="ChEBI" id="CHEBI:60344"/>
        <dbReference type="ChEBI" id="CHEBI:60530"/>
        <dbReference type="ChEBI" id="CHEBI:175763"/>
        <dbReference type="EC" id="2.5.1.141"/>
    </reaction>
</comment>
<comment type="pathway">
    <text evidence="1">Porphyrin-containing compound metabolism; heme O biosynthesis; heme O from protoheme: step 1/1.</text>
</comment>
<comment type="subcellular location">
    <subcellularLocation>
        <location evidence="1">Cell inner membrane</location>
        <topology evidence="1">Multi-pass membrane protein</topology>
    </subcellularLocation>
</comment>
<comment type="miscellaneous">
    <text evidence="1">Carbon 2 of the heme B porphyrin ring is defined according to the Fischer nomenclature.</text>
</comment>
<comment type="similarity">
    <text evidence="1">Belongs to the UbiA prenyltransferase family. Protoheme IX farnesyltransferase subfamily.</text>
</comment>
<sequence length="323" mass="35703">MIGTNVIRRNANFLQVIKSYYQLTKPRIIPLLLITTAAAMWIASNGQVDPVLLLVTLLGGTLAAASAQTLNCIYDQDIDYAMLRTRARPIPSGRVRPLHALIFAIILAVLSFTLFVVFVNMASALLAMSGIAFYMLIYTHMLKRHSPQNIVIGGAAGSIPPLVGWAAVTGDLSWAAWALFAIIFLWTPPHFWALALMIKDDYAQVNVPMMPVVEGEESTVEQIWIYTLIVVPFTFILVYPLAASGIVYTLVALVLGGMFIYKTWQLKQNPLDKDLARSLFKYSILYMMLLCTGMVVDSLPMTHEMIAAVGDNLNTLVSLIPLH</sequence>
<proteinExistence type="inferred from homology"/>
<accession>B7KHX2</accession>
<reference key="1">
    <citation type="journal article" date="2011" name="MBio">
        <title>Novel metabolic attributes of the genus Cyanothece, comprising a group of unicellular nitrogen-fixing Cyanobacteria.</title>
        <authorList>
            <person name="Bandyopadhyay A."/>
            <person name="Elvitigala T."/>
            <person name="Welsh E."/>
            <person name="Stockel J."/>
            <person name="Liberton M."/>
            <person name="Min H."/>
            <person name="Sherman L.A."/>
            <person name="Pakrasi H.B."/>
        </authorList>
    </citation>
    <scope>NUCLEOTIDE SEQUENCE [LARGE SCALE GENOMIC DNA]</scope>
    <source>
        <strain>PCC 7424</strain>
    </source>
</reference>
<gene>
    <name evidence="1" type="primary">ctaB</name>
    <name type="ordered locus">PCC7424_3688</name>
</gene>
<evidence type="ECO:0000255" key="1">
    <source>
        <dbReference type="HAMAP-Rule" id="MF_00154"/>
    </source>
</evidence>
<name>COXX_GLOC7</name>
<dbReference type="EC" id="2.5.1.141" evidence="1"/>
<dbReference type="EMBL" id="CP001291">
    <property type="protein sequence ID" value="ACK72069.1"/>
    <property type="molecule type" value="Genomic_DNA"/>
</dbReference>
<dbReference type="RefSeq" id="WP_015955662.1">
    <property type="nucleotide sequence ID" value="NC_011729.1"/>
</dbReference>
<dbReference type="SMR" id="B7KHX2"/>
<dbReference type="STRING" id="65393.PCC7424_3688"/>
<dbReference type="KEGG" id="cyc:PCC7424_3688"/>
<dbReference type="eggNOG" id="COG0109">
    <property type="taxonomic scope" value="Bacteria"/>
</dbReference>
<dbReference type="HOGENOM" id="CLU_029631_0_2_3"/>
<dbReference type="OrthoDB" id="9814417at2"/>
<dbReference type="UniPathway" id="UPA00834">
    <property type="reaction ID" value="UER00712"/>
</dbReference>
<dbReference type="Proteomes" id="UP000002384">
    <property type="component" value="Chromosome"/>
</dbReference>
<dbReference type="GO" id="GO:0005886">
    <property type="term" value="C:plasma membrane"/>
    <property type="evidence" value="ECO:0007669"/>
    <property type="project" value="UniProtKB-SubCell"/>
</dbReference>
<dbReference type="GO" id="GO:0008495">
    <property type="term" value="F:protoheme IX farnesyltransferase activity"/>
    <property type="evidence" value="ECO:0007669"/>
    <property type="project" value="UniProtKB-UniRule"/>
</dbReference>
<dbReference type="GO" id="GO:0048034">
    <property type="term" value="P:heme O biosynthetic process"/>
    <property type="evidence" value="ECO:0007669"/>
    <property type="project" value="UniProtKB-UniRule"/>
</dbReference>
<dbReference type="CDD" id="cd13957">
    <property type="entry name" value="PT_UbiA_Cox10"/>
    <property type="match status" value="1"/>
</dbReference>
<dbReference type="FunFam" id="1.10.357.140:FF:000001">
    <property type="entry name" value="Protoheme IX farnesyltransferase"/>
    <property type="match status" value="1"/>
</dbReference>
<dbReference type="Gene3D" id="1.10.357.140">
    <property type="entry name" value="UbiA prenyltransferase"/>
    <property type="match status" value="1"/>
</dbReference>
<dbReference type="HAMAP" id="MF_00154">
    <property type="entry name" value="CyoE_CtaB"/>
    <property type="match status" value="1"/>
</dbReference>
<dbReference type="InterPro" id="IPR006369">
    <property type="entry name" value="Protohaem_IX_farnesylTrfase"/>
</dbReference>
<dbReference type="InterPro" id="IPR000537">
    <property type="entry name" value="UbiA_prenyltransferase"/>
</dbReference>
<dbReference type="InterPro" id="IPR030470">
    <property type="entry name" value="UbiA_prenylTrfase_CS"/>
</dbReference>
<dbReference type="InterPro" id="IPR044878">
    <property type="entry name" value="UbiA_sf"/>
</dbReference>
<dbReference type="NCBIfam" id="TIGR01473">
    <property type="entry name" value="cyoE_ctaB"/>
    <property type="match status" value="1"/>
</dbReference>
<dbReference type="NCBIfam" id="NF003349">
    <property type="entry name" value="PRK04375.1-2"/>
    <property type="match status" value="1"/>
</dbReference>
<dbReference type="PANTHER" id="PTHR43448:SF7">
    <property type="entry name" value="4-HYDROXYBENZOATE SOLANESYLTRANSFERASE"/>
    <property type="match status" value="1"/>
</dbReference>
<dbReference type="PANTHER" id="PTHR43448">
    <property type="entry name" value="PROTOHEME IX FARNESYLTRANSFERASE, MITOCHONDRIAL"/>
    <property type="match status" value="1"/>
</dbReference>
<dbReference type="Pfam" id="PF01040">
    <property type="entry name" value="UbiA"/>
    <property type="match status" value="1"/>
</dbReference>
<dbReference type="PROSITE" id="PS00943">
    <property type="entry name" value="UBIA"/>
    <property type="match status" value="1"/>
</dbReference>
<feature type="chain" id="PRO_1000199648" description="Protoheme IX farnesyltransferase">
    <location>
        <begin position="1"/>
        <end position="323"/>
    </location>
</feature>
<feature type="transmembrane region" description="Helical" evidence="1">
    <location>
        <begin position="28"/>
        <end position="48"/>
    </location>
</feature>
<feature type="transmembrane region" description="Helical" evidence="1">
    <location>
        <begin position="50"/>
        <end position="70"/>
    </location>
</feature>
<feature type="transmembrane region" description="Helical" evidence="1">
    <location>
        <begin position="99"/>
        <end position="119"/>
    </location>
</feature>
<feature type="transmembrane region" description="Helical" evidence="1">
    <location>
        <begin position="122"/>
        <end position="142"/>
    </location>
</feature>
<feature type="transmembrane region" description="Helical" evidence="1">
    <location>
        <begin position="150"/>
        <end position="170"/>
    </location>
</feature>
<feature type="transmembrane region" description="Helical" evidence="1">
    <location>
        <begin position="178"/>
        <end position="198"/>
    </location>
</feature>
<feature type="transmembrane region" description="Helical" evidence="1">
    <location>
        <begin position="223"/>
        <end position="243"/>
    </location>
</feature>
<feature type="transmembrane region" description="Helical" evidence="1">
    <location>
        <begin position="244"/>
        <end position="264"/>
    </location>
</feature>
<feature type="transmembrane region" description="Helical" evidence="1">
    <location>
        <begin position="279"/>
        <end position="299"/>
    </location>
</feature>
<protein>
    <recommendedName>
        <fullName evidence="1">Protoheme IX farnesyltransferase</fullName>
        <ecNumber evidence="1">2.5.1.141</ecNumber>
    </recommendedName>
    <alternativeName>
        <fullName evidence="1">Heme B farnesyltransferase</fullName>
    </alternativeName>
    <alternativeName>
        <fullName evidence="1">Heme O synthase</fullName>
    </alternativeName>
</protein>